<reference key="1">
    <citation type="journal article" date="2007" name="Proc. Natl. Acad. Sci. U.S.A.">
        <title>The tiny eukaryote Ostreococcus provides genomic insights into the paradox of plankton speciation.</title>
        <authorList>
            <person name="Palenik B."/>
            <person name="Grimwood J."/>
            <person name="Aerts A."/>
            <person name="Rouze P."/>
            <person name="Salamov A."/>
            <person name="Putnam N."/>
            <person name="Dupont C."/>
            <person name="Jorgensen R."/>
            <person name="Derelle E."/>
            <person name="Rombauts S."/>
            <person name="Zhou K."/>
            <person name="Otillar R."/>
            <person name="Merchant S.S."/>
            <person name="Podell S."/>
            <person name="Gaasterland T."/>
            <person name="Napoli C."/>
            <person name="Gendler K."/>
            <person name="Manuell A."/>
            <person name="Tai V."/>
            <person name="Vallon O."/>
            <person name="Piganeau G."/>
            <person name="Jancek S."/>
            <person name="Heijde M."/>
            <person name="Jabbari K."/>
            <person name="Bowler C."/>
            <person name="Lohr M."/>
            <person name="Robbens S."/>
            <person name="Werner G."/>
            <person name="Dubchak I."/>
            <person name="Pazour G.J."/>
            <person name="Ren Q."/>
            <person name="Paulsen I."/>
            <person name="Delwiche C."/>
            <person name="Schmutz J."/>
            <person name="Rokhsar D."/>
            <person name="Van de Peer Y."/>
            <person name="Moreau H."/>
            <person name="Grigoriev I.V."/>
        </authorList>
    </citation>
    <scope>NUCLEOTIDE SEQUENCE [LARGE SCALE GENOMIC DNA]</scope>
    <source>
        <strain>CCE9901</strain>
    </source>
</reference>
<proteinExistence type="inferred from homology"/>
<keyword id="KW-0012">Acyltransferase</keyword>
<keyword id="KW-0028">Amino-acid biosynthesis</keyword>
<keyword id="KW-0055">Arginine biosynthesis</keyword>
<keyword id="KW-0068">Autocatalytic cleavage</keyword>
<keyword id="KW-0150">Chloroplast</keyword>
<keyword id="KW-0511">Multifunctional enzyme</keyword>
<keyword id="KW-0934">Plastid</keyword>
<keyword id="KW-1185">Reference proteome</keyword>
<keyword id="KW-0808">Transferase</keyword>
<sequence>MTSRGRARASDRRARGAVVASGKIDFTDAGCFELPYAPVAEALLPEGPWKVVEGGVCAAKGFKVAGYKAGLRAKGTRADCALIVADEDATCAGIFTTNIMCAAPVTYCKKQLAGKPTARALLINAAQANAATGDQGAADAQATAEELSKSLGVAEEDILLMSTGVIGKRIKLDKLMPAIPILSANVESSTAAANAAATAICTTDLVRKTVAIEVQIGGKTVCMGGMAKGSGMIHPNMATMLGVVTCDADVTPEVWRNITSRAGAASFNQISVDGDTSTNDSLVCFASGKAGNAKITSVDSAEGKLLEQALTAVCRGLAKAIAWDGEGATCLIECNVSGAADDEDARVIARSVVCSSLAKAAIFGHDPNWGRLACAAGYAAPVKNRFDQNDLKLSLGPHQLMDKGQPLDFDAVAASRYLKEVTGVHGTCVVDISVGNGSGRGQAWGCDLSYDYVKINAEYTT</sequence>
<name>ARGJ_OSTLU</name>
<gene>
    <name type="ORF">OSTLU_33128</name>
</gene>
<evidence type="ECO:0000255" key="1">
    <source>
        <dbReference type="HAMAP-Rule" id="MF_03124"/>
    </source>
</evidence>
<comment type="function">
    <text evidence="1">Catalyzes two activities which are involved in the cyclic version of arginine biosynthesis: the synthesis of acetylglutamate from glutamate and acetyl-CoA, and of ornithine by transacetylation between acetylornithine and glutamate.</text>
</comment>
<comment type="catalytic activity">
    <reaction evidence="1">
        <text>N(2)-acetyl-L-ornithine + L-glutamate = N-acetyl-L-glutamate + L-ornithine</text>
        <dbReference type="Rhea" id="RHEA:15349"/>
        <dbReference type="ChEBI" id="CHEBI:29985"/>
        <dbReference type="ChEBI" id="CHEBI:44337"/>
        <dbReference type="ChEBI" id="CHEBI:46911"/>
        <dbReference type="ChEBI" id="CHEBI:57805"/>
        <dbReference type="EC" id="2.3.1.35"/>
    </reaction>
</comment>
<comment type="catalytic activity">
    <reaction evidence="1">
        <text>L-glutamate + acetyl-CoA = N-acetyl-L-glutamate + CoA + H(+)</text>
        <dbReference type="Rhea" id="RHEA:24292"/>
        <dbReference type="ChEBI" id="CHEBI:15378"/>
        <dbReference type="ChEBI" id="CHEBI:29985"/>
        <dbReference type="ChEBI" id="CHEBI:44337"/>
        <dbReference type="ChEBI" id="CHEBI:57287"/>
        <dbReference type="ChEBI" id="CHEBI:57288"/>
        <dbReference type="EC" id="2.3.1.1"/>
    </reaction>
</comment>
<comment type="pathway">
    <text evidence="1">Amino-acid biosynthesis; L-arginine biosynthesis; L-ornithine and N-acetyl-L-glutamate from L-glutamate and N(2)-acetyl-L-ornithine (cyclic): step 1/1.</text>
</comment>
<comment type="pathway">
    <text evidence="1">Amino-acid biosynthesis; L-arginine biosynthesis; N(2)-acetyl-L-ornithine from L-glutamate: step 1/4.</text>
</comment>
<comment type="subunit">
    <text evidence="1">Heterodimer of an alpha and a beta chain.</text>
</comment>
<comment type="subcellular location">
    <subcellularLocation>
        <location evidence="1">Plastid</location>
        <location evidence="1">Chloroplast</location>
    </subcellularLocation>
</comment>
<comment type="miscellaneous">
    <text evidence="1">This protein may be expected to contain an N-terminal transit peptide but none has been predicted.</text>
</comment>
<comment type="similarity">
    <text evidence="1">Belongs to the ArgJ family.</text>
</comment>
<feature type="chain" id="PRO_0000397982" description="Arginine biosynthesis bifunctional protein ArgJ alpha chain" evidence="1">
    <location>
        <begin position="1"/>
        <end position="238"/>
    </location>
</feature>
<feature type="chain" id="PRO_0000397983" description="Arginine biosynthesis bifunctional protein ArgJ beta chain" evidence="1">
    <location>
        <begin position="239"/>
        <end position="461"/>
    </location>
</feature>
<feature type="active site" description="Nucleophile" evidence="1">
    <location>
        <position position="239"/>
    </location>
</feature>
<feature type="binding site" evidence="1">
    <location>
        <position position="202"/>
    </location>
    <ligand>
        <name>substrate</name>
    </ligand>
</feature>
<feature type="binding site" evidence="1">
    <location>
        <position position="228"/>
    </location>
    <ligand>
        <name>substrate</name>
    </ligand>
</feature>
<feature type="binding site" evidence="1">
    <location>
        <position position="239"/>
    </location>
    <ligand>
        <name>substrate</name>
    </ligand>
</feature>
<feature type="binding site" evidence="1">
    <location>
        <position position="326"/>
    </location>
    <ligand>
        <name>substrate</name>
    </ligand>
</feature>
<feature type="binding site" evidence="1">
    <location>
        <position position="456"/>
    </location>
    <ligand>
        <name>substrate</name>
    </ligand>
</feature>
<feature type="binding site" evidence="1">
    <location>
        <position position="461"/>
    </location>
    <ligand>
        <name>substrate</name>
    </ligand>
</feature>
<feature type="site" description="Involved in the stabilization of negative charge on the oxyanion by the formation of the oxyanion hole" evidence="1">
    <location>
        <position position="163"/>
    </location>
</feature>
<feature type="site" description="Involved in the stabilization of negative charge on the oxyanion by the formation of the oxyanion hole" evidence="1">
    <location>
        <position position="164"/>
    </location>
</feature>
<feature type="site" description="Cleavage; by autolysis" evidence="1">
    <location>
        <begin position="238"/>
        <end position="239"/>
    </location>
</feature>
<accession>A4S1K1</accession>
<organism>
    <name type="scientific">Ostreococcus lucimarinus (strain CCE9901)</name>
    <dbReference type="NCBI Taxonomy" id="436017"/>
    <lineage>
        <taxon>Eukaryota</taxon>
        <taxon>Viridiplantae</taxon>
        <taxon>Chlorophyta</taxon>
        <taxon>Mamiellophyceae</taxon>
        <taxon>Mamiellales</taxon>
        <taxon>Bathycoccaceae</taxon>
        <taxon>Ostreococcus</taxon>
    </lineage>
</organism>
<dbReference type="EC" id="2.3.1.35" evidence="1"/>
<dbReference type="EC" id="2.3.1.1" evidence="1"/>
<dbReference type="EMBL" id="CP000588">
    <property type="protein sequence ID" value="ABO97456.1"/>
    <property type="molecule type" value="Genomic_DNA"/>
</dbReference>
<dbReference type="RefSeq" id="XP_001419163.1">
    <property type="nucleotide sequence ID" value="XM_001419126.1"/>
</dbReference>
<dbReference type="SMR" id="A4S1K1"/>
<dbReference type="STRING" id="436017.A4S1K1"/>
<dbReference type="MEROPS" id="T05.002"/>
<dbReference type="EnsemblPlants" id="ABO97456">
    <property type="protein sequence ID" value="ABO97456"/>
    <property type="gene ID" value="OSTLU_33128"/>
</dbReference>
<dbReference type="GeneID" id="5003448"/>
<dbReference type="Gramene" id="ABO97456">
    <property type="protein sequence ID" value="ABO97456"/>
    <property type="gene ID" value="OSTLU_33128"/>
</dbReference>
<dbReference type="KEGG" id="olu:OSTLU_33128"/>
<dbReference type="eggNOG" id="KOG2786">
    <property type="taxonomic scope" value="Eukaryota"/>
</dbReference>
<dbReference type="HOGENOM" id="CLU_027172_1_1_1"/>
<dbReference type="OMA" id="WGRIVMA"/>
<dbReference type="OrthoDB" id="2017946at2759"/>
<dbReference type="UniPathway" id="UPA00068">
    <property type="reaction ID" value="UER00106"/>
</dbReference>
<dbReference type="UniPathway" id="UPA00068">
    <property type="reaction ID" value="UER00111"/>
</dbReference>
<dbReference type="Proteomes" id="UP000001568">
    <property type="component" value="Chromosome 8"/>
</dbReference>
<dbReference type="GO" id="GO:0009507">
    <property type="term" value="C:chloroplast"/>
    <property type="evidence" value="ECO:0007669"/>
    <property type="project" value="UniProtKB-SubCell"/>
</dbReference>
<dbReference type="GO" id="GO:0004358">
    <property type="term" value="F:glutamate N-acetyltransferase activity"/>
    <property type="evidence" value="ECO:0007669"/>
    <property type="project" value="UniProtKB-UniRule"/>
</dbReference>
<dbReference type="GO" id="GO:0004042">
    <property type="term" value="F:L-glutamate N-acetyltransferase activity"/>
    <property type="evidence" value="ECO:0007669"/>
    <property type="project" value="UniProtKB-UniRule"/>
</dbReference>
<dbReference type="GO" id="GO:0006526">
    <property type="term" value="P:L-arginine biosynthetic process"/>
    <property type="evidence" value="ECO:0007669"/>
    <property type="project" value="UniProtKB-UniRule"/>
</dbReference>
<dbReference type="GO" id="GO:0006592">
    <property type="term" value="P:ornithine biosynthetic process"/>
    <property type="evidence" value="ECO:0007669"/>
    <property type="project" value="TreeGrafter"/>
</dbReference>
<dbReference type="CDD" id="cd02152">
    <property type="entry name" value="OAT"/>
    <property type="match status" value="1"/>
</dbReference>
<dbReference type="FunFam" id="3.10.20.340:FF:000001">
    <property type="entry name" value="Arginine biosynthesis bifunctional protein ArgJ, chloroplastic"/>
    <property type="match status" value="1"/>
</dbReference>
<dbReference type="FunFam" id="3.60.70.12:FF:000001">
    <property type="entry name" value="Arginine biosynthesis bifunctional protein ArgJ, chloroplastic"/>
    <property type="match status" value="1"/>
</dbReference>
<dbReference type="Gene3D" id="3.30.2330.10">
    <property type="entry name" value="arginine biosynthesis bifunctional protein suprefamily"/>
    <property type="match status" value="1"/>
</dbReference>
<dbReference type="Gene3D" id="3.10.20.340">
    <property type="entry name" value="ArgJ beta chain, C-terminal domain"/>
    <property type="match status" value="1"/>
</dbReference>
<dbReference type="Gene3D" id="3.60.70.12">
    <property type="entry name" value="L-amino peptidase D-ALA esterase/amidase"/>
    <property type="match status" value="1"/>
</dbReference>
<dbReference type="HAMAP" id="MF_01106">
    <property type="entry name" value="ArgJ"/>
    <property type="match status" value="1"/>
</dbReference>
<dbReference type="InterPro" id="IPR002813">
    <property type="entry name" value="Arg_biosynth_ArgJ"/>
</dbReference>
<dbReference type="InterPro" id="IPR016117">
    <property type="entry name" value="ArgJ-like_dom_sf"/>
</dbReference>
<dbReference type="InterPro" id="IPR042195">
    <property type="entry name" value="ArgJ_beta_C"/>
</dbReference>
<dbReference type="NCBIfam" id="TIGR00120">
    <property type="entry name" value="ArgJ"/>
    <property type="match status" value="1"/>
</dbReference>
<dbReference type="NCBIfam" id="NF003802">
    <property type="entry name" value="PRK05388.1"/>
    <property type="match status" value="1"/>
</dbReference>
<dbReference type="PANTHER" id="PTHR23100">
    <property type="entry name" value="ARGININE BIOSYNTHESIS BIFUNCTIONAL PROTEIN ARGJ"/>
    <property type="match status" value="1"/>
</dbReference>
<dbReference type="PANTHER" id="PTHR23100:SF0">
    <property type="entry name" value="ARGININE BIOSYNTHESIS BIFUNCTIONAL PROTEIN ARGJ, MITOCHONDRIAL"/>
    <property type="match status" value="1"/>
</dbReference>
<dbReference type="Pfam" id="PF01960">
    <property type="entry name" value="ArgJ"/>
    <property type="match status" value="1"/>
</dbReference>
<dbReference type="SUPFAM" id="SSF56266">
    <property type="entry name" value="DmpA/ArgJ-like"/>
    <property type="match status" value="1"/>
</dbReference>
<protein>
    <recommendedName>
        <fullName evidence="1">Arginine biosynthesis bifunctional protein ArgJ, chloroplastic</fullName>
    </recommendedName>
    <domain>
        <recommendedName>
            <fullName evidence="1">Glutamate N-acetyltransferase</fullName>
            <shortName evidence="1">GAT</shortName>
            <ecNumber evidence="1">2.3.1.35</ecNumber>
        </recommendedName>
        <alternativeName>
            <fullName evidence="1">Ornithine acetyltransferase</fullName>
            <shortName evidence="1">OATase</shortName>
        </alternativeName>
        <alternativeName>
            <fullName evidence="1">Ornithine transacetylase</fullName>
        </alternativeName>
    </domain>
    <domain>
        <recommendedName>
            <fullName evidence="1">Amino-acid acetyltransferase</fullName>
            <ecNumber evidence="1">2.3.1.1</ecNumber>
        </recommendedName>
        <alternativeName>
            <fullName evidence="1">N-acetylglutamate synthase</fullName>
            <shortName evidence="1">AGS</shortName>
        </alternativeName>
    </domain>
    <component>
        <recommendedName>
            <fullName evidence="1">Arginine biosynthesis bifunctional protein ArgJ alpha chain</fullName>
        </recommendedName>
    </component>
    <component>
        <recommendedName>
            <fullName evidence="1">Arginine biosynthesis bifunctional protein ArgJ beta chain</fullName>
        </recommendedName>
    </component>
</protein>